<comment type="function">
    <text evidence="1 4">Involved in vesicular protein trafficking, mainly in the early secretory pathway. Involved in the maintenance of the Golgi apparatus. Appears to play a role in the biosynthesis of secreted cargo including processing. Involved in endoplasmic reticulum stress response. May play a role in the regulation of heat-shock response and apoptosis (By similarity).</text>
</comment>
<comment type="subcellular location">
    <subcellularLocation>
        <location evidence="4">Endoplasmic reticulum membrane</location>
        <topology evidence="4">Single-pass type I membrane protein</topology>
    </subcellularLocation>
</comment>
<comment type="induction">
    <text evidence="4">By brefeldin A, oxidative stress and heat shock, but not by tunicamycin, hypersomotic stress or serum starvation.</text>
</comment>
<comment type="similarity">
    <text evidence="5">Belongs to the EMP24/GP25L family.</text>
</comment>
<sequence>MAGVGVGPLQGMVRFGLLVLTVCAACARGLYFHIGETEKRCFIEEIPDETMVIGNYRTQMWDKQKEVFLPSTPGLGMHVEVKDPDGKVVLSRQYGSEGRFTFTSHTPGDHQICLHSNSTRMALFAGGKLRVHLDIQVGEHANNYPEIAAKDKLTELQLRARQLLDQVEQIQKEQDYQRYREERFRLTSESTNQRVLWWSIAQTVILILTGIWQMRHLKSFFEAKKLV</sequence>
<name>TMED4_MOUSE</name>
<protein>
    <recommendedName>
        <fullName>Transmembrane emp24 domain-containing protein 4</fullName>
    </recommendedName>
    <alternativeName>
        <fullName>Endoplasmic reticulum stress-response protein 25</fullName>
        <shortName>ERS25</shortName>
    </alternativeName>
    <alternativeName>
        <fullName>p24 family protein alpha-3</fullName>
        <shortName>p24alpha3</shortName>
    </alternativeName>
    <alternativeName>
        <fullName>p26</fullName>
    </alternativeName>
</protein>
<accession>Q8R1V4</accession>
<accession>Q3TY55</accession>
<proteinExistence type="evidence at protein level"/>
<dbReference type="EMBL" id="AF368921">
    <property type="protein sequence ID" value="AAM20821.1"/>
    <property type="molecule type" value="mRNA"/>
</dbReference>
<dbReference type="EMBL" id="AK078425">
    <property type="protein sequence ID" value="BAC37268.1"/>
    <property type="molecule type" value="mRNA"/>
</dbReference>
<dbReference type="EMBL" id="AK158876">
    <property type="protein sequence ID" value="BAE34708.1"/>
    <property type="molecule type" value="mRNA"/>
</dbReference>
<dbReference type="EMBL" id="AL607152">
    <property type="status" value="NOT_ANNOTATED_CDS"/>
    <property type="molecule type" value="Genomic_DNA"/>
</dbReference>
<dbReference type="EMBL" id="BC023041">
    <property type="protein sequence ID" value="AAH23041.1"/>
    <property type="molecule type" value="mRNA"/>
</dbReference>
<dbReference type="CCDS" id="CCDS24415.1"/>
<dbReference type="RefSeq" id="NP_598781.1">
    <property type="nucleotide sequence ID" value="NM_134020.1"/>
</dbReference>
<dbReference type="SMR" id="Q8R1V4"/>
<dbReference type="BioGRID" id="222141">
    <property type="interactions" value="4"/>
</dbReference>
<dbReference type="FunCoup" id="Q8R1V4">
    <property type="interactions" value="2713"/>
</dbReference>
<dbReference type="STRING" id="10090.ENSMUSP00000004508"/>
<dbReference type="GlyConnect" id="2783">
    <property type="glycosylation" value="6 N-Linked glycans (1 site)"/>
</dbReference>
<dbReference type="GlyCosmos" id="Q8R1V4">
    <property type="glycosylation" value="1 site, 13 glycans"/>
</dbReference>
<dbReference type="GlyGen" id="Q8R1V4">
    <property type="glycosylation" value="1 site, 7 N-linked glycans (1 site)"/>
</dbReference>
<dbReference type="iPTMnet" id="Q8R1V4"/>
<dbReference type="PhosphoSitePlus" id="Q8R1V4"/>
<dbReference type="SwissPalm" id="Q8R1V4"/>
<dbReference type="jPOST" id="Q8R1V4"/>
<dbReference type="PaxDb" id="10090-ENSMUSP00000004508"/>
<dbReference type="PeptideAtlas" id="Q8R1V4"/>
<dbReference type="ProteomicsDB" id="259252"/>
<dbReference type="Pumba" id="Q8R1V4"/>
<dbReference type="Antibodypedia" id="13441">
    <property type="antibodies" value="142 antibodies from 25 providers"/>
</dbReference>
<dbReference type="DNASU" id="103694"/>
<dbReference type="Ensembl" id="ENSMUST00000004508.13">
    <property type="protein sequence ID" value="ENSMUSP00000004508.7"/>
    <property type="gene ID" value="ENSMUSG00000004394.13"/>
</dbReference>
<dbReference type="GeneID" id="103694"/>
<dbReference type="KEGG" id="mmu:103694"/>
<dbReference type="UCSC" id="uc007hye.1">
    <property type="organism name" value="mouse"/>
</dbReference>
<dbReference type="AGR" id="MGI:1915070"/>
<dbReference type="CTD" id="222068"/>
<dbReference type="MGI" id="MGI:1915070">
    <property type="gene designation" value="Tmed4"/>
</dbReference>
<dbReference type="VEuPathDB" id="HostDB:ENSMUSG00000004394"/>
<dbReference type="eggNOG" id="KOG1690">
    <property type="taxonomic scope" value="Eukaryota"/>
</dbReference>
<dbReference type="GeneTree" id="ENSGT00940000159012"/>
<dbReference type="HOGENOM" id="CLU_066963_2_2_1"/>
<dbReference type="InParanoid" id="Q8R1V4"/>
<dbReference type="OMA" id="YYICISC"/>
<dbReference type="OrthoDB" id="3427at2759"/>
<dbReference type="PhylomeDB" id="Q8R1V4"/>
<dbReference type="TreeFam" id="TF314123"/>
<dbReference type="BioGRID-ORCS" id="103694">
    <property type="hits" value="3 hits in 77 CRISPR screens"/>
</dbReference>
<dbReference type="PRO" id="PR:Q8R1V4"/>
<dbReference type="Proteomes" id="UP000000589">
    <property type="component" value="Chromosome 11"/>
</dbReference>
<dbReference type="RNAct" id="Q8R1V4">
    <property type="molecule type" value="protein"/>
</dbReference>
<dbReference type="Bgee" id="ENSMUSG00000004394">
    <property type="expression patterns" value="Expressed in epithelium of stomach and 270 other cell types or tissues"/>
</dbReference>
<dbReference type="ExpressionAtlas" id="Q8R1V4">
    <property type="expression patterns" value="baseline and differential"/>
</dbReference>
<dbReference type="GO" id="GO:0005789">
    <property type="term" value="C:endoplasmic reticulum membrane"/>
    <property type="evidence" value="ECO:0007669"/>
    <property type="project" value="UniProtKB-SubCell"/>
</dbReference>
<dbReference type="GO" id="GO:0015031">
    <property type="term" value="P:protein transport"/>
    <property type="evidence" value="ECO:0007669"/>
    <property type="project" value="UniProtKB-KW"/>
</dbReference>
<dbReference type="InterPro" id="IPR015720">
    <property type="entry name" value="Emp24-like"/>
</dbReference>
<dbReference type="InterPro" id="IPR009038">
    <property type="entry name" value="GOLD_dom"/>
</dbReference>
<dbReference type="PANTHER" id="PTHR22811">
    <property type="entry name" value="TRANSMEMBRANE EMP24 DOMAIN-CONTAINING PROTEIN"/>
    <property type="match status" value="1"/>
</dbReference>
<dbReference type="Pfam" id="PF01105">
    <property type="entry name" value="EMP24_GP25L"/>
    <property type="match status" value="1"/>
</dbReference>
<dbReference type="SMART" id="SM01190">
    <property type="entry name" value="EMP24_GP25L"/>
    <property type="match status" value="1"/>
</dbReference>
<dbReference type="PROSITE" id="PS50866">
    <property type="entry name" value="GOLD"/>
    <property type="match status" value="1"/>
</dbReference>
<organism>
    <name type="scientific">Mus musculus</name>
    <name type="common">Mouse</name>
    <dbReference type="NCBI Taxonomy" id="10090"/>
    <lineage>
        <taxon>Eukaryota</taxon>
        <taxon>Metazoa</taxon>
        <taxon>Chordata</taxon>
        <taxon>Craniata</taxon>
        <taxon>Vertebrata</taxon>
        <taxon>Euteleostomi</taxon>
        <taxon>Mammalia</taxon>
        <taxon>Eutheria</taxon>
        <taxon>Euarchontoglires</taxon>
        <taxon>Glires</taxon>
        <taxon>Rodentia</taxon>
        <taxon>Myomorpha</taxon>
        <taxon>Muroidea</taxon>
        <taxon>Muridae</taxon>
        <taxon>Murinae</taxon>
        <taxon>Mus</taxon>
        <taxon>Mus</taxon>
    </lineage>
</organism>
<gene>
    <name type="primary">Tmed4</name>
    <name type="synonym">Ers25</name>
</gene>
<reference key="1">
    <citation type="submission" date="2001-04" db="EMBL/GenBank/DDBJ databases">
        <authorList>
            <person name="Zhang W."/>
            <person name="Xie Z."/>
            <person name="Cao X."/>
        </authorList>
    </citation>
    <scope>NUCLEOTIDE SEQUENCE [MRNA]</scope>
</reference>
<reference key="2">
    <citation type="journal article" date="2005" name="Science">
        <title>The transcriptional landscape of the mammalian genome.</title>
        <authorList>
            <person name="Carninci P."/>
            <person name="Kasukawa T."/>
            <person name="Katayama S."/>
            <person name="Gough J."/>
            <person name="Frith M.C."/>
            <person name="Maeda N."/>
            <person name="Oyama R."/>
            <person name="Ravasi T."/>
            <person name="Lenhard B."/>
            <person name="Wells C."/>
            <person name="Kodzius R."/>
            <person name="Shimokawa K."/>
            <person name="Bajic V.B."/>
            <person name="Brenner S.E."/>
            <person name="Batalov S."/>
            <person name="Forrest A.R."/>
            <person name="Zavolan M."/>
            <person name="Davis M.J."/>
            <person name="Wilming L.G."/>
            <person name="Aidinis V."/>
            <person name="Allen J.E."/>
            <person name="Ambesi-Impiombato A."/>
            <person name="Apweiler R."/>
            <person name="Aturaliya R.N."/>
            <person name="Bailey T.L."/>
            <person name="Bansal M."/>
            <person name="Baxter L."/>
            <person name="Beisel K.W."/>
            <person name="Bersano T."/>
            <person name="Bono H."/>
            <person name="Chalk A.M."/>
            <person name="Chiu K.P."/>
            <person name="Choudhary V."/>
            <person name="Christoffels A."/>
            <person name="Clutterbuck D.R."/>
            <person name="Crowe M.L."/>
            <person name="Dalla E."/>
            <person name="Dalrymple B.P."/>
            <person name="de Bono B."/>
            <person name="Della Gatta G."/>
            <person name="di Bernardo D."/>
            <person name="Down T."/>
            <person name="Engstrom P."/>
            <person name="Fagiolini M."/>
            <person name="Faulkner G."/>
            <person name="Fletcher C.F."/>
            <person name="Fukushima T."/>
            <person name="Furuno M."/>
            <person name="Futaki S."/>
            <person name="Gariboldi M."/>
            <person name="Georgii-Hemming P."/>
            <person name="Gingeras T.R."/>
            <person name="Gojobori T."/>
            <person name="Green R.E."/>
            <person name="Gustincich S."/>
            <person name="Harbers M."/>
            <person name="Hayashi Y."/>
            <person name="Hensch T.K."/>
            <person name="Hirokawa N."/>
            <person name="Hill D."/>
            <person name="Huminiecki L."/>
            <person name="Iacono M."/>
            <person name="Ikeo K."/>
            <person name="Iwama A."/>
            <person name="Ishikawa T."/>
            <person name="Jakt M."/>
            <person name="Kanapin A."/>
            <person name="Katoh M."/>
            <person name="Kawasawa Y."/>
            <person name="Kelso J."/>
            <person name="Kitamura H."/>
            <person name="Kitano H."/>
            <person name="Kollias G."/>
            <person name="Krishnan S.P."/>
            <person name="Kruger A."/>
            <person name="Kummerfeld S.K."/>
            <person name="Kurochkin I.V."/>
            <person name="Lareau L.F."/>
            <person name="Lazarevic D."/>
            <person name="Lipovich L."/>
            <person name="Liu J."/>
            <person name="Liuni S."/>
            <person name="McWilliam S."/>
            <person name="Madan Babu M."/>
            <person name="Madera M."/>
            <person name="Marchionni L."/>
            <person name="Matsuda H."/>
            <person name="Matsuzawa S."/>
            <person name="Miki H."/>
            <person name="Mignone F."/>
            <person name="Miyake S."/>
            <person name="Morris K."/>
            <person name="Mottagui-Tabar S."/>
            <person name="Mulder N."/>
            <person name="Nakano N."/>
            <person name="Nakauchi H."/>
            <person name="Ng P."/>
            <person name="Nilsson R."/>
            <person name="Nishiguchi S."/>
            <person name="Nishikawa S."/>
            <person name="Nori F."/>
            <person name="Ohara O."/>
            <person name="Okazaki Y."/>
            <person name="Orlando V."/>
            <person name="Pang K.C."/>
            <person name="Pavan W.J."/>
            <person name="Pavesi G."/>
            <person name="Pesole G."/>
            <person name="Petrovsky N."/>
            <person name="Piazza S."/>
            <person name="Reed J."/>
            <person name="Reid J.F."/>
            <person name="Ring B.Z."/>
            <person name="Ringwald M."/>
            <person name="Rost B."/>
            <person name="Ruan Y."/>
            <person name="Salzberg S.L."/>
            <person name="Sandelin A."/>
            <person name="Schneider C."/>
            <person name="Schoenbach C."/>
            <person name="Sekiguchi K."/>
            <person name="Semple C.A."/>
            <person name="Seno S."/>
            <person name="Sessa L."/>
            <person name="Sheng Y."/>
            <person name="Shibata Y."/>
            <person name="Shimada H."/>
            <person name="Shimada K."/>
            <person name="Silva D."/>
            <person name="Sinclair B."/>
            <person name="Sperling S."/>
            <person name="Stupka E."/>
            <person name="Sugiura K."/>
            <person name="Sultana R."/>
            <person name="Takenaka Y."/>
            <person name="Taki K."/>
            <person name="Tammoja K."/>
            <person name="Tan S.L."/>
            <person name="Tang S."/>
            <person name="Taylor M.S."/>
            <person name="Tegner J."/>
            <person name="Teichmann S.A."/>
            <person name="Ueda H.R."/>
            <person name="van Nimwegen E."/>
            <person name="Verardo R."/>
            <person name="Wei C.L."/>
            <person name="Yagi K."/>
            <person name="Yamanishi H."/>
            <person name="Zabarovsky E."/>
            <person name="Zhu S."/>
            <person name="Zimmer A."/>
            <person name="Hide W."/>
            <person name="Bult C."/>
            <person name="Grimmond S.M."/>
            <person name="Teasdale R.D."/>
            <person name="Liu E.T."/>
            <person name="Brusic V."/>
            <person name="Quackenbush J."/>
            <person name="Wahlestedt C."/>
            <person name="Mattick J.S."/>
            <person name="Hume D.A."/>
            <person name="Kai C."/>
            <person name="Sasaki D."/>
            <person name="Tomaru Y."/>
            <person name="Fukuda S."/>
            <person name="Kanamori-Katayama M."/>
            <person name="Suzuki M."/>
            <person name="Aoki J."/>
            <person name="Arakawa T."/>
            <person name="Iida J."/>
            <person name="Imamura K."/>
            <person name="Itoh M."/>
            <person name="Kato T."/>
            <person name="Kawaji H."/>
            <person name="Kawagashira N."/>
            <person name="Kawashima T."/>
            <person name="Kojima M."/>
            <person name="Kondo S."/>
            <person name="Konno H."/>
            <person name="Nakano K."/>
            <person name="Ninomiya N."/>
            <person name="Nishio T."/>
            <person name="Okada M."/>
            <person name="Plessy C."/>
            <person name="Shibata K."/>
            <person name="Shiraki T."/>
            <person name="Suzuki S."/>
            <person name="Tagami M."/>
            <person name="Waki K."/>
            <person name="Watahiki A."/>
            <person name="Okamura-Oho Y."/>
            <person name="Suzuki H."/>
            <person name="Kawai J."/>
            <person name="Hayashizaki Y."/>
        </authorList>
    </citation>
    <scope>NUCLEOTIDE SEQUENCE [LARGE SCALE MRNA]</scope>
    <source>
        <strain>C57BL/6J</strain>
        <tissue>Visual cortex</tissue>
        <tissue>Wolffian duct</tissue>
    </source>
</reference>
<reference key="3">
    <citation type="journal article" date="2009" name="PLoS Biol.">
        <title>Lineage-specific biology revealed by a finished genome assembly of the mouse.</title>
        <authorList>
            <person name="Church D.M."/>
            <person name="Goodstadt L."/>
            <person name="Hillier L.W."/>
            <person name="Zody M.C."/>
            <person name="Goldstein S."/>
            <person name="She X."/>
            <person name="Bult C.J."/>
            <person name="Agarwala R."/>
            <person name="Cherry J.L."/>
            <person name="DiCuccio M."/>
            <person name="Hlavina W."/>
            <person name="Kapustin Y."/>
            <person name="Meric P."/>
            <person name="Maglott D."/>
            <person name="Birtle Z."/>
            <person name="Marques A.C."/>
            <person name="Graves T."/>
            <person name="Zhou S."/>
            <person name="Teague B."/>
            <person name="Potamousis K."/>
            <person name="Churas C."/>
            <person name="Place M."/>
            <person name="Herschleb J."/>
            <person name="Runnheim R."/>
            <person name="Forrest D."/>
            <person name="Amos-Landgraf J."/>
            <person name="Schwartz D.C."/>
            <person name="Cheng Z."/>
            <person name="Lindblad-Toh K."/>
            <person name="Eichler E.E."/>
            <person name="Ponting C.P."/>
        </authorList>
    </citation>
    <scope>NUCLEOTIDE SEQUENCE [LARGE SCALE GENOMIC DNA]</scope>
    <source>
        <strain>C57BL/6J</strain>
    </source>
</reference>
<reference key="4">
    <citation type="journal article" date="2004" name="Genome Res.">
        <title>The status, quality, and expansion of the NIH full-length cDNA project: the Mammalian Gene Collection (MGC).</title>
        <authorList>
            <consortium name="The MGC Project Team"/>
        </authorList>
    </citation>
    <scope>NUCLEOTIDE SEQUENCE [LARGE SCALE MRNA]</scope>
    <source>
        <tissue>Eye</tissue>
    </source>
</reference>
<reference key="5">
    <citation type="journal article" date="2008" name="J. Biol. Chem.">
        <title>Novel oxidative stress-responsive gene ERS25 functions as a regulator of the heat-shock and cell death response.</title>
        <authorList>
            <person name="Hwang S.O."/>
            <person name="Boswell S.A."/>
            <person name="Seo J.-S."/>
            <person name="Lee S.W."/>
        </authorList>
    </citation>
    <scope>FUNCTION</scope>
    <scope>SUBCELLULAR LOCATION</scope>
    <scope>INDUCTION</scope>
</reference>
<reference key="6">
    <citation type="journal article" date="2010" name="Cell">
        <title>A tissue-specific atlas of mouse protein phosphorylation and expression.</title>
        <authorList>
            <person name="Huttlin E.L."/>
            <person name="Jedrychowski M.P."/>
            <person name="Elias J.E."/>
            <person name="Goswami T."/>
            <person name="Rad R."/>
            <person name="Beausoleil S.A."/>
            <person name="Villen J."/>
            <person name="Haas W."/>
            <person name="Sowa M.E."/>
            <person name="Gygi S.P."/>
        </authorList>
    </citation>
    <scope>IDENTIFICATION BY MASS SPECTROMETRY [LARGE SCALE ANALYSIS]</scope>
    <source>
        <tissue>Brain</tissue>
        <tissue>Brown adipose tissue</tissue>
        <tissue>Heart</tissue>
        <tissue>Kidney</tissue>
        <tissue>Liver</tissue>
        <tissue>Lung</tissue>
        <tissue>Pancreas</tissue>
        <tissue>Spleen</tissue>
        <tissue>Testis</tissue>
    </source>
</reference>
<evidence type="ECO:0000250" key="1"/>
<evidence type="ECO:0000255" key="2"/>
<evidence type="ECO:0000255" key="3">
    <source>
        <dbReference type="PROSITE-ProRule" id="PRU00096"/>
    </source>
</evidence>
<evidence type="ECO:0000269" key="4">
    <source>
    </source>
</evidence>
<evidence type="ECO:0000305" key="5"/>
<feature type="signal peptide" evidence="2">
    <location>
        <begin position="1"/>
        <end position="29"/>
    </location>
</feature>
<feature type="chain" id="PRO_0000010388" description="Transmembrane emp24 domain-containing protein 4">
    <location>
        <begin position="30"/>
        <end position="227"/>
    </location>
</feature>
<feature type="topological domain" description="Lumenal" evidence="2">
    <location>
        <begin position="30"/>
        <end position="194"/>
    </location>
</feature>
<feature type="transmembrane region" description="Helical" evidence="2">
    <location>
        <begin position="195"/>
        <end position="212"/>
    </location>
</feature>
<feature type="topological domain" description="Cytoplasmic" evidence="2">
    <location>
        <begin position="213"/>
        <end position="227"/>
    </location>
</feature>
<feature type="domain" description="GOLD" evidence="3">
    <location>
        <begin position="39"/>
        <end position="137"/>
    </location>
</feature>
<feature type="coiled-coil region" evidence="2">
    <location>
        <begin position="147"/>
        <end position="176"/>
    </location>
</feature>
<feature type="short sequence motif" description="COPI vesicle coat-binding" evidence="2">
    <location>
        <begin position="220"/>
        <end position="227"/>
    </location>
</feature>
<feature type="short sequence motif" description="COPII vesicle coat-binding" evidence="2">
    <location>
        <begin position="220"/>
        <end position="221"/>
    </location>
</feature>
<feature type="glycosylation site" description="N-linked (GlcNAc...) asparagine" evidence="2">
    <location>
        <position position="117"/>
    </location>
</feature>
<keyword id="KW-0175">Coiled coil</keyword>
<keyword id="KW-0256">Endoplasmic reticulum</keyword>
<keyword id="KW-0325">Glycoprotein</keyword>
<keyword id="KW-0472">Membrane</keyword>
<keyword id="KW-0653">Protein transport</keyword>
<keyword id="KW-1185">Reference proteome</keyword>
<keyword id="KW-0732">Signal</keyword>
<keyword id="KW-0812">Transmembrane</keyword>
<keyword id="KW-1133">Transmembrane helix</keyword>
<keyword id="KW-0813">Transport</keyword>